<evidence type="ECO:0000250" key="1"/>
<evidence type="ECO:0000255" key="2"/>
<evidence type="ECO:0000269" key="3">
    <source>
    </source>
</evidence>
<evidence type="ECO:0000305" key="4"/>
<evidence type="ECO:0000305" key="5">
    <source>
    </source>
</evidence>
<proteinExistence type="evidence at protein level"/>
<keyword id="KW-0012">Acyltransferase</keyword>
<keyword id="KW-0808">Transferase</keyword>
<accession>Q9SPU3</accession>
<dbReference type="EC" id="2.3.1.224"/>
<dbReference type="EMBL" id="AF139130">
    <property type="protein sequence ID" value="AAF04787.1"/>
    <property type="molecule type" value="mRNA"/>
</dbReference>
<dbReference type="SMR" id="Q9SPU3"/>
<dbReference type="SABIO-RK" id="Q9SPU3"/>
<dbReference type="GO" id="GO:0102720">
    <property type="term" value="F:acetyl-coenzyme A:acetyl alcohol acetyltransferase activity"/>
    <property type="evidence" value="ECO:0007669"/>
    <property type="project" value="UniProtKB-EC"/>
</dbReference>
<dbReference type="Gene3D" id="3.30.559.10">
    <property type="entry name" value="Chloramphenicol acetyltransferase-like domain"/>
    <property type="match status" value="2"/>
</dbReference>
<dbReference type="InterPro" id="IPR023213">
    <property type="entry name" value="CAT-like_dom_sf"/>
</dbReference>
<dbReference type="PANTHER" id="PTHR31623:SF83">
    <property type="entry name" value="ACETYL-COA-BENZYLALCOHOL ACETYLTRANSFERASE-LIKE"/>
    <property type="match status" value="1"/>
</dbReference>
<dbReference type="PANTHER" id="PTHR31623">
    <property type="entry name" value="F21J9.9"/>
    <property type="match status" value="1"/>
</dbReference>
<dbReference type="Pfam" id="PF02458">
    <property type="entry name" value="Transferase"/>
    <property type="match status" value="1"/>
</dbReference>
<protein>
    <recommendedName>
        <fullName>Acetyl-CoA-benzylalcohol acetyltransferase</fullName>
        <shortName>CbBEAT-2</shortName>
        <ecNumber>2.3.1.224</ecNumber>
    </recommendedName>
</protein>
<reference key="1">
    <citation type="journal article" date="1999" name="Plant Cell Physiol.">
        <title>Characterization of benzylalcohol acetyltransferases in scented and non-scented Clarkia species.</title>
        <authorList>
            <person name="Nam K.H."/>
            <person name="Dudareva N."/>
            <person name="Pichersky E."/>
        </authorList>
    </citation>
    <scope>NUCLEOTIDE SEQUENCE [MRNA]</scope>
    <scope>FUNCTION</scope>
    <scope>CATALYTIC ACTIVITY</scope>
    <scope>BIOPHYSICOCHEMICAL PROPERTIES</scope>
    <scope>DEVELOPMENTAL STAGE</scope>
    <source>
        <strain>cv. non-scented line</strain>
    </source>
</reference>
<comment type="function">
    <text evidence="3">Involved in the biosynthesis of benzyl acetate, a major constituent of the floral scent. Can use benzylalcohol, cinnamylalcohol, 3-cis-hexene-1-ol or heptanol as substrates. Has some activity with 2-phenylethanol and 2-naphtalene-ethanol.</text>
</comment>
<comment type="catalytic activity">
    <reaction evidence="3">
        <text>benzyl alcohol + acetyl-CoA = benzyl acetate + CoA</text>
        <dbReference type="Rhea" id="RHEA:36147"/>
        <dbReference type="ChEBI" id="CHEBI:17987"/>
        <dbReference type="ChEBI" id="CHEBI:52051"/>
        <dbReference type="ChEBI" id="CHEBI:57287"/>
        <dbReference type="ChEBI" id="CHEBI:57288"/>
        <dbReference type="EC" id="2.3.1.224"/>
    </reaction>
</comment>
<comment type="catalytic activity">
    <reaction evidence="3">
        <text>(E)-cinnamyl alcohol + acetyl-CoA = (E)-cinnamyl acetate + CoA</text>
        <dbReference type="Rhea" id="RHEA:36151"/>
        <dbReference type="ChEBI" id="CHEBI:33227"/>
        <dbReference type="ChEBI" id="CHEBI:57287"/>
        <dbReference type="ChEBI" id="CHEBI:57288"/>
        <dbReference type="ChEBI" id="CHEBI:156069"/>
        <dbReference type="EC" id="2.3.1.224"/>
    </reaction>
</comment>
<comment type="biophysicochemical properties">
    <kinetics>
        <KM evidence="3">120 uM for benzylalcohol</KM>
        <Vmax evidence="3">683.0 pmol/sec/mg enzyme</Vmax>
    </kinetics>
</comment>
<comment type="developmental stage">
    <text evidence="3">Expression in petals peaks on the day of anthesis.</text>
</comment>
<comment type="similarity">
    <text evidence="4">Belongs to the plant acyltransferase family.</text>
</comment>
<comment type="caution">
    <text evidence="5">The cv. scented line contains a higher amount of the protein (AC O64988) and a higher activity, even though it has similar levels of mRNA (PubMed:10588064).</text>
</comment>
<gene>
    <name type="primary">BEAT</name>
</gene>
<feature type="chain" id="PRO_0000424079" description="Acetyl-CoA-benzylalcohol acetyltransferase">
    <location>
        <begin position="1"/>
        <end position="433"/>
    </location>
</feature>
<feature type="active site" description="Proton acceptor" evidence="1">
    <location>
        <position position="152"/>
    </location>
</feature>
<feature type="active site" description="Proton acceptor" evidence="2">
    <location>
        <position position="377"/>
    </location>
</feature>
<sequence>MNVTMHSKKLLKPSIPTPNHLQKLNLSLLDQIQIPFYVGLIFHYETLSDNSDITLSKLESSLSETLTLYYHVAGRYNGTDCVIECNDQGIGYVETAFDVELHQFLLGEESNNLDLLVGLSGFLSETETPPLAAIQLNMFKCGGLVIGAQFNHIIGDMFTMSTFMNSWAKACRVGIKEVAHPTFGLAPLMPSAKVLNIPPPPSFEGVKFVSKRFVFHENALTRLRKEATEEDGDGDDDQKKKRPSRVDLVTAFLSKSLIEMDCAPKELTKSRPSLMVHMMNLRKRTKLALENDVSGNFFIVVNAESKITVAPKITDLTESLGSACGEIISEVAKVDDAEVVSSMVLNSVREFYYEWGKGEKNVFVYSSWCRFPLYEVDFGWGIPSLVDTTAFPFGLIVLMDEAPAGDGIAVRACLSEHDMIQFQQHHQLLSYVS</sequence>
<name>BEATL_CLABR</name>
<organism>
    <name type="scientific">Clarkia breweri</name>
    <name type="common">Fairy fans</name>
    <name type="synonym">Eucharidium breweri</name>
    <dbReference type="NCBI Taxonomy" id="36903"/>
    <lineage>
        <taxon>Eukaryota</taxon>
        <taxon>Viridiplantae</taxon>
        <taxon>Streptophyta</taxon>
        <taxon>Embryophyta</taxon>
        <taxon>Tracheophyta</taxon>
        <taxon>Spermatophyta</taxon>
        <taxon>Magnoliopsida</taxon>
        <taxon>eudicotyledons</taxon>
        <taxon>Gunneridae</taxon>
        <taxon>Pentapetalae</taxon>
        <taxon>rosids</taxon>
        <taxon>malvids</taxon>
        <taxon>Myrtales</taxon>
        <taxon>Onagraceae</taxon>
        <taxon>Onagroideae</taxon>
        <taxon>Onagreae</taxon>
        <taxon>Clarkia</taxon>
    </lineage>
</organism>